<evidence type="ECO:0000255" key="1">
    <source>
        <dbReference type="HAMAP-Rule" id="MF_00171"/>
    </source>
</evidence>
<sequence>MTRLRIDLAYDGGGFYGWAKQPNLRTVQGTIEDALHKVLRVPTDDAAEPLRLTVAGRTDTGVHASHQVAHLDVSDEVLNRCVGHMTIPVTEALTRRLKAVLPSDIVIHGIAVAPVGFDARFSALERTYVYRVADRSSEVDPRLRGCVLTVDEALDLELMNRAASLTIGLHDFGSFATPNPGGTTIREVKTAYWRRVPITPLVPDEMASHEAYRTPSLESGLVVFTIVADAFARNMVRSLVGSCIKVGSGRKSLEWFAGKMAEPVREGSSGPIAPQGLTLEHIAYPADDQLAARAEAIRAVRTL</sequence>
<gene>
    <name evidence="1" type="primary">truA</name>
    <name type="ordered locus">BLD_1735</name>
</gene>
<protein>
    <recommendedName>
        <fullName evidence="1">tRNA pseudouridine synthase A</fullName>
        <ecNumber evidence="1">5.4.99.12</ecNumber>
    </recommendedName>
    <alternativeName>
        <fullName evidence="1">tRNA pseudouridine(38-40) synthase</fullName>
    </alternativeName>
    <alternativeName>
        <fullName evidence="1">tRNA pseudouridylate synthase I</fullName>
    </alternativeName>
    <alternativeName>
        <fullName evidence="1">tRNA-uridine isomerase I</fullName>
    </alternativeName>
</protein>
<comment type="function">
    <text evidence="1">Formation of pseudouridine at positions 38, 39 and 40 in the anticodon stem and loop of transfer RNAs.</text>
</comment>
<comment type="catalytic activity">
    <reaction evidence="1">
        <text>uridine(38/39/40) in tRNA = pseudouridine(38/39/40) in tRNA</text>
        <dbReference type="Rhea" id="RHEA:22376"/>
        <dbReference type="Rhea" id="RHEA-COMP:10085"/>
        <dbReference type="Rhea" id="RHEA-COMP:10087"/>
        <dbReference type="ChEBI" id="CHEBI:65314"/>
        <dbReference type="ChEBI" id="CHEBI:65315"/>
        <dbReference type="EC" id="5.4.99.12"/>
    </reaction>
</comment>
<comment type="subunit">
    <text evidence="1">Homodimer.</text>
</comment>
<comment type="similarity">
    <text evidence="1">Belongs to the tRNA pseudouridine synthase TruA family.</text>
</comment>
<proteinExistence type="inferred from homology"/>
<dbReference type="EC" id="5.4.99.12" evidence="1"/>
<dbReference type="EMBL" id="CP000605">
    <property type="protein sequence ID" value="ACD99180.1"/>
    <property type="molecule type" value="Genomic_DNA"/>
</dbReference>
<dbReference type="RefSeq" id="WP_007053050.1">
    <property type="nucleotide sequence ID" value="NZ_AABM02000016.1"/>
</dbReference>
<dbReference type="SMR" id="B3DQE2"/>
<dbReference type="KEGG" id="blj:BLD_1735"/>
<dbReference type="HOGENOM" id="CLU_014673_0_2_11"/>
<dbReference type="Proteomes" id="UP000002419">
    <property type="component" value="Chromosome"/>
</dbReference>
<dbReference type="GO" id="GO:0003723">
    <property type="term" value="F:RNA binding"/>
    <property type="evidence" value="ECO:0007669"/>
    <property type="project" value="InterPro"/>
</dbReference>
<dbReference type="GO" id="GO:0160147">
    <property type="term" value="F:tRNA pseudouridine(38-40) synthase activity"/>
    <property type="evidence" value="ECO:0007669"/>
    <property type="project" value="UniProtKB-EC"/>
</dbReference>
<dbReference type="GO" id="GO:0031119">
    <property type="term" value="P:tRNA pseudouridine synthesis"/>
    <property type="evidence" value="ECO:0007669"/>
    <property type="project" value="UniProtKB-UniRule"/>
</dbReference>
<dbReference type="CDD" id="cd02570">
    <property type="entry name" value="PseudoU_synth_EcTruA"/>
    <property type="match status" value="1"/>
</dbReference>
<dbReference type="Gene3D" id="3.30.70.660">
    <property type="entry name" value="Pseudouridine synthase I, catalytic domain, C-terminal subdomain"/>
    <property type="match status" value="1"/>
</dbReference>
<dbReference type="Gene3D" id="3.30.70.580">
    <property type="entry name" value="Pseudouridine synthase I, catalytic domain, N-terminal subdomain"/>
    <property type="match status" value="1"/>
</dbReference>
<dbReference type="HAMAP" id="MF_00171">
    <property type="entry name" value="TruA"/>
    <property type="match status" value="1"/>
</dbReference>
<dbReference type="InterPro" id="IPR020103">
    <property type="entry name" value="PsdUridine_synth_cat_dom_sf"/>
</dbReference>
<dbReference type="InterPro" id="IPR001406">
    <property type="entry name" value="PsdUridine_synth_TruA"/>
</dbReference>
<dbReference type="InterPro" id="IPR020097">
    <property type="entry name" value="PsdUridine_synth_TruA_a/b_dom"/>
</dbReference>
<dbReference type="InterPro" id="IPR020095">
    <property type="entry name" value="PsdUridine_synth_TruA_C"/>
</dbReference>
<dbReference type="InterPro" id="IPR020094">
    <property type="entry name" value="TruA/RsuA/RluB/E/F_N"/>
</dbReference>
<dbReference type="NCBIfam" id="TIGR00071">
    <property type="entry name" value="hisT_truA"/>
    <property type="match status" value="1"/>
</dbReference>
<dbReference type="PANTHER" id="PTHR11142">
    <property type="entry name" value="PSEUDOURIDYLATE SYNTHASE"/>
    <property type="match status" value="1"/>
</dbReference>
<dbReference type="PANTHER" id="PTHR11142:SF0">
    <property type="entry name" value="TRNA PSEUDOURIDINE SYNTHASE-LIKE 1"/>
    <property type="match status" value="1"/>
</dbReference>
<dbReference type="Pfam" id="PF01416">
    <property type="entry name" value="PseudoU_synth_1"/>
    <property type="match status" value="1"/>
</dbReference>
<dbReference type="PIRSF" id="PIRSF001430">
    <property type="entry name" value="tRNA_psdUrid_synth"/>
    <property type="match status" value="1"/>
</dbReference>
<dbReference type="SUPFAM" id="SSF55120">
    <property type="entry name" value="Pseudouridine synthase"/>
    <property type="match status" value="1"/>
</dbReference>
<organism>
    <name type="scientific">Bifidobacterium longum (strain DJO10A)</name>
    <dbReference type="NCBI Taxonomy" id="205913"/>
    <lineage>
        <taxon>Bacteria</taxon>
        <taxon>Bacillati</taxon>
        <taxon>Actinomycetota</taxon>
        <taxon>Actinomycetes</taxon>
        <taxon>Bifidobacteriales</taxon>
        <taxon>Bifidobacteriaceae</taxon>
        <taxon>Bifidobacterium</taxon>
    </lineage>
</organism>
<reference key="1">
    <citation type="journal article" date="2008" name="BMC Genomics">
        <title>Comparative genomic analysis of the gut bacterium Bifidobacterium longum reveals loci susceptible to deletion during pure culture growth.</title>
        <authorList>
            <person name="Lee J.H."/>
            <person name="Karamychev V.N."/>
            <person name="Kozyavkin S.A."/>
            <person name="Mills D."/>
            <person name="Pavlov A.R."/>
            <person name="Pavlova N.V."/>
            <person name="Polouchine N.N."/>
            <person name="Richardson P.M."/>
            <person name="Shakhova V.V."/>
            <person name="Slesarev A.I."/>
            <person name="Weimer B."/>
            <person name="O'Sullivan D.J."/>
        </authorList>
    </citation>
    <scope>NUCLEOTIDE SEQUENCE [LARGE SCALE GENOMIC DNA]</scope>
    <source>
        <strain>DJO10A</strain>
    </source>
</reference>
<keyword id="KW-0413">Isomerase</keyword>
<keyword id="KW-0819">tRNA processing</keyword>
<feature type="chain" id="PRO_1000097719" description="tRNA pseudouridine synthase A">
    <location>
        <begin position="1"/>
        <end position="303"/>
    </location>
</feature>
<feature type="active site" description="Nucleophile" evidence="1">
    <location>
        <position position="59"/>
    </location>
</feature>
<feature type="binding site" evidence="1">
    <location>
        <position position="128"/>
    </location>
    <ligand>
        <name>substrate</name>
    </ligand>
</feature>
<accession>B3DQE2</accession>
<name>TRUA_BIFLD</name>